<dbReference type="EC" id="5.1.3.1" evidence="2"/>
<dbReference type="EMBL" id="AK007735">
    <property type="status" value="NOT_ANNOTATED_CDS"/>
    <property type="molecule type" value="mRNA"/>
</dbReference>
<dbReference type="EMBL" id="AK017774">
    <property type="protein sequence ID" value="BAB30922.2"/>
    <property type="molecule type" value="mRNA"/>
</dbReference>
<dbReference type="EMBL" id="AK088152">
    <property type="protein sequence ID" value="BAC40175.1"/>
    <property type="molecule type" value="mRNA"/>
</dbReference>
<dbReference type="EMBL" id="AK029088">
    <property type="protein sequence ID" value="BAC26287.1"/>
    <property type="status" value="ALT_SEQ"/>
    <property type="molecule type" value="mRNA"/>
</dbReference>
<dbReference type="EMBL" id="BC019126">
    <property type="protein sequence ID" value="AAH19126.1"/>
    <property type="molecule type" value="mRNA"/>
</dbReference>
<dbReference type="CCDS" id="CCDS15022.1"/>
<dbReference type="RefSeq" id="NP_001297571.1">
    <property type="nucleotide sequence ID" value="NM_001310642.1"/>
</dbReference>
<dbReference type="RefSeq" id="NP_001297572.1">
    <property type="nucleotide sequence ID" value="NM_001310643.1"/>
</dbReference>
<dbReference type="RefSeq" id="NP_001297573.1">
    <property type="nucleotide sequence ID" value="NM_001310644.1"/>
</dbReference>
<dbReference type="RefSeq" id="NP_079959.2">
    <property type="nucleotide sequence ID" value="NM_025683.3"/>
</dbReference>
<dbReference type="SMR" id="Q8VEE0"/>
<dbReference type="BioGRID" id="211619">
    <property type="interactions" value="1"/>
</dbReference>
<dbReference type="FunCoup" id="Q8VEE0">
    <property type="interactions" value="3524"/>
</dbReference>
<dbReference type="STRING" id="10090.ENSMUSP00000109628"/>
<dbReference type="iPTMnet" id="Q8VEE0"/>
<dbReference type="PhosphoSitePlus" id="Q8VEE0"/>
<dbReference type="jPOST" id="Q8VEE0"/>
<dbReference type="PaxDb" id="10090-ENSMUSP00000027157"/>
<dbReference type="ProteomicsDB" id="299943"/>
<dbReference type="Pumba" id="Q8VEE0"/>
<dbReference type="DNASU" id="66646"/>
<dbReference type="Ensembl" id="ENSMUST00000027157.10">
    <property type="protein sequence ID" value="ENSMUSP00000027157.4"/>
    <property type="gene ID" value="ENSMUSG00000026005.16"/>
</dbReference>
<dbReference type="GeneID" id="66646"/>
<dbReference type="KEGG" id="mmu:66646"/>
<dbReference type="UCSC" id="uc007bik.1">
    <property type="organism name" value="mouse"/>
</dbReference>
<dbReference type="AGR" id="MGI:1913896"/>
<dbReference type="CTD" id="6120"/>
<dbReference type="MGI" id="MGI:1913896">
    <property type="gene designation" value="Rpe"/>
</dbReference>
<dbReference type="VEuPathDB" id="HostDB:ENSMUSG00000026005"/>
<dbReference type="eggNOG" id="KOG3111">
    <property type="taxonomic scope" value="Eukaryota"/>
</dbReference>
<dbReference type="GeneTree" id="ENSGT00390000001447"/>
<dbReference type="HOGENOM" id="CLU_054856_0_1_1"/>
<dbReference type="InParanoid" id="Q8VEE0"/>
<dbReference type="OMA" id="CHLMIED"/>
<dbReference type="OrthoDB" id="1927044at2759"/>
<dbReference type="PhylomeDB" id="Q8VEE0"/>
<dbReference type="TreeFam" id="TF300157"/>
<dbReference type="Reactome" id="R-MMU-71336">
    <property type="pathway name" value="Pentose phosphate pathway"/>
</dbReference>
<dbReference type="BioGRID-ORCS" id="66646">
    <property type="hits" value="21 hits in 74 CRISPR screens"/>
</dbReference>
<dbReference type="ChiTaRS" id="Rpe">
    <property type="organism name" value="mouse"/>
</dbReference>
<dbReference type="PRO" id="PR:Q8VEE0"/>
<dbReference type="Proteomes" id="UP000000589">
    <property type="component" value="Chromosome 1"/>
</dbReference>
<dbReference type="RNAct" id="Q8VEE0">
    <property type="molecule type" value="protein"/>
</dbReference>
<dbReference type="Bgee" id="ENSMUSG00000026005">
    <property type="expression patterns" value="Expressed in saccule of membranous labyrinth and 251 other cell types or tissues"/>
</dbReference>
<dbReference type="ExpressionAtlas" id="Q8VEE0">
    <property type="expression patterns" value="baseline and differential"/>
</dbReference>
<dbReference type="GO" id="GO:0005829">
    <property type="term" value="C:cytosol"/>
    <property type="evidence" value="ECO:0000314"/>
    <property type="project" value="MGI"/>
</dbReference>
<dbReference type="GO" id="GO:0004750">
    <property type="term" value="F:D-ribulose-phosphate 3-epimerase activity"/>
    <property type="evidence" value="ECO:0000314"/>
    <property type="project" value="MGI"/>
</dbReference>
<dbReference type="GO" id="GO:0046872">
    <property type="term" value="F:metal ion binding"/>
    <property type="evidence" value="ECO:0000250"/>
    <property type="project" value="UniProtKB"/>
</dbReference>
<dbReference type="GO" id="GO:0048029">
    <property type="term" value="F:monosaccharide binding"/>
    <property type="evidence" value="ECO:0007669"/>
    <property type="project" value="Ensembl"/>
</dbReference>
<dbReference type="GO" id="GO:0005975">
    <property type="term" value="P:carbohydrate metabolic process"/>
    <property type="evidence" value="ECO:0000250"/>
    <property type="project" value="UniProtKB"/>
</dbReference>
<dbReference type="GO" id="GO:0006098">
    <property type="term" value="P:pentose-phosphate shunt"/>
    <property type="evidence" value="ECO:0000314"/>
    <property type="project" value="MGI"/>
</dbReference>
<dbReference type="GO" id="GO:0009052">
    <property type="term" value="P:pentose-phosphate shunt, non-oxidative branch"/>
    <property type="evidence" value="ECO:0007669"/>
    <property type="project" value="Ensembl"/>
</dbReference>
<dbReference type="CDD" id="cd00429">
    <property type="entry name" value="RPE"/>
    <property type="match status" value="1"/>
</dbReference>
<dbReference type="FunFam" id="3.20.20.70:FF:000191">
    <property type="entry name" value="ribulose-phosphate 3-epimerase isoform X2"/>
    <property type="match status" value="1"/>
</dbReference>
<dbReference type="Gene3D" id="3.20.20.70">
    <property type="entry name" value="Aldolase class I"/>
    <property type="match status" value="1"/>
</dbReference>
<dbReference type="HAMAP" id="MF_02227">
    <property type="entry name" value="RPE"/>
    <property type="match status" value="1"/>
</dbReference>
<dbReference type="InterPro" id="IPR013785">
    <property type="entry name" value="Aldolase_TIM"/>
</dbReference>
<dbReference type="InterPro" id="IPR026019">
    <property type="entry name" value="Ribul_P_3_epim"/>
</dbReference>
<dbReference type="InterPro" id="IPR000056">
    <property type="entry name" value="Ribul_P_3_epim-like"/>
</dbReference>
<dbReference type="InterPro" id="IPR011060">
    <property type="entry name" value="RibuloseP-bd_barrel"/>
</dbReference>
<dbReference type="NCBIfam" id="NF004076">
    <property type="entry name" value="PRK05581.1-4"/>
    <property type="match status" value="1"/>
</dbReference>
<dbReference type="NCBIfam" id="TIGR01163">
    <property type="entry name" value="rpe"/>
    <property type="match status" value="1"/>
</dbReference>
<dbReference type="PANTHER" id="PTHR11749">
    <property type="entry name" value="RIBULOSE-5-PHOSPHATE-3-EPIMERASE"/>
    <property type="match status" value="1"/>
</dbReference>
<dbReference type="Pfam" id="PF00834">
    <property type="entry name" value="Ribul_P_3_epim"/>
    <property type="match status" value="1"/>
</dbReference>
<dbReference type="PIRSF" id="PIRSF001461">
    <property type="entry name" value="RPE"/>
    <property type="match status" value="1"/>
</dbReference>
<dbReference type="SUPFAM" id="SSF51366">
    <property type="entry name" value="Ribulose-phoshate binding barrel"/>
    <property type="match status" value="1"/>
</dbReference>
<dbReference type="PROSITE" id="PS01085">
    <property type="entry name" value="RIBUL_P_3_EPIMER_1"/>
    <property type="match status" value="1"/>
</dbReference>
<dbReference type="PROSITE" id="PS01086">
    <property type="entry name" value="RIBUL_P_3_EPIMER_2"/>
    <property type="match status" value="1"/>
</dbReference>
<comment type="function">
    <text evidence="2">Catalyzes the reversible epimerization of D-ribulose 5-phosphate to D-xylulose 5-phosphate.</text>
</comment>
<comment type="catalytic activity">
    <reaction evidence="2">
        <text>D-ribulose 5-phosphate = D-xylulose 5-phosphate</text>
        <dbReference type="Rhea" id="RHEA:13677"/>
        <dbReference type="ChEBI" id="CHEBI:57737"/>
        <dbReference type="ChEBI" id="CHEBI:58121"/>
        <dbReference type="EC" id="5.1.3.1"/>
    </reaction>
</comment>
<comment type="cofactor">
    <cofactor evidence="2">
        <name>Fe(2+)</name>
        <dbReference type="ChEBI" id="CHEBI:29033"/>
    </cofactor>
    <cofactor evidence="2">
        <name>Mn(2+)</name>
        <dbReference type="ChEBI" id="CHEBI:29035"/>
    </cofactor>
    <cofactor evidence="2">
        <name>Zn(2+)</name>
        <dbReference type="ChEBI" id="CHEBI:29105"/>
    </cofactor>
    <cofactor evidence="2">
        <name>Co(2+)</name>
        <dbReference type="ChEBI" id="CHEBI:48828"/>
    </cofactor>
    <text evidence="2">Binds 1 divalent metal cation per subunit. Active with Fe(2+), and probably also with Mn(2+), Zn(2+) and Co(2+).</text>
</comment>
<comment type="pathway">
    <text evidence="2">Carbohydrate degradation.</text>
</comment>
<comment type="subunit">
    <text evidence="2">Homodimer.</text>
</comment>
<comment type="similarity">
    <text evidence="3">Belongs to the ribulose-phosphate 3-epimerase family.</text>
</comment>
<comment type="sequence caution" evidence="3">
    <conflict type="erroneous termination">
        <sequence resource="EMBL-CDS" id="BAC26287"/>
    </conflict>
    <text>Extended C-terminus.</text>
</comment>
<comment type="sequence caution" evidence="3">
    <conflict type="miscellaneous discrepancy">
        <sequence resource="EMBL-CDS" id="BAC26287"/>
    </conflict>
</comment>
<feature type="initiator methionine" description="Removed" evidence="2">
    <location>
        <position position="1"/>
    </location>
</feature>
<feature type="chain" id="PRO_0000171588" description="Ribulose-phosphate 3-epimerase">
    <location>
        <begin position="2"/>
        <end position="228"/>
    </location>
</feature>
<feature type="active site" description="Proton acceptor" evidence="1">
    <location>
        <position position="37"/>
    </location>
</feature>
<feature type="active site" description="Proton donor" evidence="1">
    <location>
        <position position="175"/>
    </location>
</feature>
<feature type="binding site" evidence="1">
    <location>
        <position position="10"/>
    </location>
    <ligand>
        <name>substrate</name>
    </ligand>
</feature>
<feature type="binding site" evidence="1">
    <location>
        <position position="35"/>
    </location>
    <ligand>
        <name>a divalent metal cation</name>
        <dbReference type="ChEBI" id="CHEBI:60240"/>
    </ligand>
</feature>
<feature type="binding site" evidence="1">
    <location>
        <position position="37"/>
    </location>
    <ligand>
        <name>a divalent metal cation</name>
        <dbReference type="ChEBI" id="CHEBI:60240"/>
    </ligand>
</feature>
<feature type="binding site" evidence="1">
    <location>
        <position position="70"/>
    </location>
    <ligand>
        <name>a divalent metal cation</name>
        <dbReference type="ChEBI" id="CHEBI:60240"/>
    </ligand>
</feature>
<feature type="binding site" evidence="1">
    <location>
        <position position="70"/>
    </location>
    <ligand>
        <name>substrate</name>
    </ligand>
</feature>
<feature type="binding site" evidence="1">
    <location>
        <begin position="146"/>
        <end position="149"/>
    </location>
    <ligand>
        <name>substrate</name>
    </ligand>
</feature>
<feature type="binding site" evidence="1">
    <location>
        <begin position="175"/>
        <end position="177"/>
    </location>
    <ligand>
        <name>substrate</name>
    </ligand>
</feature>
<feature type="binding site" evidence="1">
    <location>
        <position position="175"/>
    </location>
    <ligand>
        <name>a divalent metal cation</name>
        <dbReference type="ChEBI" id="CHEBI:60240"/>
    </ligand>
</feature>
<feature type="binding site" evidence="1">
    <location>
        <begin position="197"/>
        <end position="198"/>
    </location>
    <ligand>
        <name>substrate</name>
    </ligand>
</feature>
<feature type="modified residue" description="N-acetylalanine" evidence="2">
    <location>
        <position position="2"/>
    </location>
</feature>
<protein>
    <recommendedName>
        <fullName>Ribulose-phosphate 3-epimerase</fullName>
        <ecNumber evidence="2">5.1.3.1</ecNumber>
    </recommendedName>
    <alternativeName>
        <fullName>Ribulose-5-phosphate-epimerase</fullName>
    </alternativeName>
</protein>
<name>RPE_MOUSE</name>
<reference key="1">
    <citation type="journal article" date="2005" name="Science">
        <title>The transcriptional landscape of the mammalian genome.</title>
        <authorList>
            <person name="Carninci P."/>
            <person name="Kasukawa T."/>
            <person name="Katayama S."/>
            <person name="Gough J."/>
            <person name="Frith M.C."/>
            <person name="Maeda N."/>
            <person name="Oyama R."/>
            <person name="Ravasi T."/>
            <person name="Lenhard B."/>
            <person name="Wells C."/>
            <person name="Kodzius R."/>
            <person name="Shimokawa K."/>
            <person name="Bajic V.B."/>
            <person name="Brenner S.E."/>
            <person name="Batalov S."/>
            <person name="Forrest A.R."/>
            <person name="Zavolan M."/>
            <person name="Davis M.J."/>
            <person name="Wilming L.G."/>
            <person name="Aidinis V."/>
            <person name="Allen J.E."/>
            <person name="Ambesi-Impiombato A."/>
            <person name="Apweiler R."/>
            <person name="Aturaliya R.N."/>
            <person name="Bailey T.L."/>
            <person name="Bansal M."/>
            <person name="Baxter L."/>
            <person name="Beisel K.W."/>
            <person name="Bersano T."/>
            <person name="Bono H."/>
            <person name="Chalk A.M."/>
            <person name="Chiu K.P."/>
            <person name="Choudhary V."/>
            <person name="Christoffels A."/>
            <person name="Clutterbuck D.R."/>
            <person name="Crowe M.L."/>
            <person name="Dalla E."/>
            <person name="Dalrymple B.P."/>
            <person name="de Bono B."/>
            <person name="Della Gatta G."/>
            <person name="di Bernardo D."/>
            <person name="Down T."/>
            <person name="Engstrom P."/>
            <person name="Fagiolini M."/>
            <person name="Faulkner G."/>
            <person name="Fletcher C.F."/>
            <person name="Fukushima T."/>
            <person name="Furuno M."/>
            <person name="Futaki S."/>
            <person name="Gariboldi M."/>
            <person name="Georgii-Hemming P."/>
            <person name="Gingeras T.R."/>
            <person name="Gojobori T."/>
            <person name="Green R.E."/>
            <person name="Gustincich S."/>
            <person name="Harbers M."/>
            <person name="Hayashi Y."/>
            <person name="Hensch T.K."/>
            <person name="Hirokawa N."/>
            <person name="Hill D."/>
            <person name="Huminiecki L."/>
            <person name="Iacono M."/>
            <person name="Ikeo K."/>
            <person name="Iwama A."/>
            <person name="Ishikawa T."/>
            <person name="Jakt M."/>
            <person name="Kanapin A."/>
            <person name="Katoh M."/>
            <person name="Kawasawa Y."/>
            <person name="Kelso J."/>
            <person name="Kitamura H."/>
            <person name="Kitano H."/>
            <person name="Kollias G."/>
            <person name="Krishnan S.P."/>
            <person name="Kruger A."/>
            <person name="Kummerfeld S.K."/>
            <person name="Kurochkin I.V."/>
            <person name="Lareau L.F."/>
            <person name="Lazarevic D."/>
            <person name="Lipovich L."/>
            <person name="Liu J."/>
            <person name="Liuni S."/>
            <person name="McWilliam S."/>
            <person name="Madan Babu M."/>
            <person name="Madera M."/>
            <person name="Marchionni L."/>
            <person name="Matsuda H."/>
            <person name="Matsuzawa S."/>
            <person name="Miki H."/>
            <person name="Mignone F."/>
            <person name="Miyake S."/>
            <person name="Morris K."/>
            <person name="Mottagui-Tabar S."/>
            <person name="Mulder N."/>
            <person name="Nakano N."/>
            <person name="Nakauchi H."/>
            <person name="Ng P."/>
            <person name="Nilsson R."/>
            <person name="Nishiguchi S."/>
            <person name="Nishikawa S."/>
            <person name="Nori F."/>
            <person name="Ohara O."/>
            <person name="Okazaki Y."/>
            <person name="Orlando V."/>
            <person name="Pang K.C."/>
            <person name="Pavan W.J."/>
            <person name="Pavesi G."/>
            <person name="Pesole G."/>
            <person name="Petrovsky N."/>
            <person name="Piazza S."/>
            <person name="Reed J."/>
            <person name="Reid J.F."/>
            <person name="Ring B.Z."/>
            <person name="Ringwald M."/>
            <person name="Rost B."/>
            <person name="Ruan Y."/>
            <person name="Salzberg S.L."/>
            <person name="Sandelin A."/>
            <person name="Schneider C."/>
            <person name="Schoenbach C."/>
            <person name="Sekiguchi K."/>
            <person name="Semple C.A."/>
            <person name="Seno S."/>
            <person name="Sessa L."/>
            <person name="Sheng Y."/>
            <person name="Shibata Y."/>
            <person name="Shimada H."/>
            <person name="Shimada K."/>
            <person name="Silva D."/>
            <person name="Sinclair B."/>
            <person name="Sperling S."/>
            <person name="Stupka E."/>
            <person name="Sugiura K."/>
            <person name="Sultana R."/>
            <person name="Takenaka Y."/>
            <person name="Taki K."/>
            <person name="Tammoja K."/>
            <person name="Tan S.L."/>
            <person name="Tang S."/>
            <person name="Taylor M.S."/>
            <person name="Tegner J."/>
            <person name="Teichmann S.A."/>
            <person name="Ueda H.R."/>
            <person name="van Nimwegen E."/>
            <person name="Verardo R."/>
            <person name="Wei C.L."/>
            <person name="Yagi K."/>
            <person name="Yamanishi H."/>
            <person name="Zabarovsky E."/>
            <person name="Zhu S."/>
            <person name="Zimmer A."/>
            <person name="Hide W."/>
            <person name="Bult C."/>
            <person name="Grimmond S.M."/>
            <person name="Teasdale R.D."/>
            <person name="Liu E.T."/>
            <person name="Brusic V."/>
            <person name="Quackenbush J."/>
            <person name="Wahlestedt C."/>
            <person name="Mattick J.S."/>
            <person name="Hume D.A."/>
            <person name="Kai C."/>
            <person name="Sasaki D."/>
            <person name="Tomaru Y."/>
            <person name="Fukuda S."/>
            <person name="Kanamori-Katayama M."/>
            <person name="Suzuki M."/>
            <person name="Aoki J."/>
            <person name="Arakawa T."/>
            <person name="Iida J."/>
            <person name="Imamura K."/>
            <person name="Itoh M."/>
            <person name="Kato T."/>
            <person name="Kawaji H."/>
            <person name="Kawagashira N."/>
            <person name="Kawashima T."/>
            <person name="Kojima M."/>
            <person name="Kondo S."/>
            <person name="Konno H."/>
            <person name="Nakano K."/>
            <person name="Ninomiya N."/>
            <person name="Nishio T."/>
            <person name="Okada M."/>
            <person name="Plessy C."/>
            <person name="Shibata K."/>
            <person name="Shiraki T."/>
            <person name="Suzuki S."/>
            <person name="Tagami M."/>
            <person name="Waki K."/>
            <person name="Watahiki A."/>
            <person name="Okamura-Oho Y."/>
            <person name="Suzuki H."/>
            <person name="Kawai J."/>
            <person name="Hayashizaki Y."/>
        </authorList>
    </citation>
    <scope>NUCLEOTIDE SEQUENCE [LARGE SCALE MRNA]</scope>
    <source>
        <strain>C57BL/6J</strain>
        <strain>NOD</strain>
        <tissue>Embryo</tissue>
        <tissue>Pancreas</tissue>
        <tissue>Skin</tissue>
        <tissue>Thymus</tissue>
    </source>
</reference>
<reference key="2">
    <citation type="journal article" date="2004" name="Genome Res.">
        <title>The status, quality, and expansion of the NIH full-length cDNA project: the Mammalian Gene Collection (MGC).</title>
        <authorList>
            <consortium name="The MGC Project Team"/>
        </authorList>
    </citation>
    <scope>NUCLEOTIDE SEQUENCE [LARGE SCALE MRNA]</scope>
    <source>
        <tissue>Bone marrow</tissue>
    </source>
</reference>
<reference key="3">
    <citation type="journal article" date="2010" name="Cell">
        <title>A tissue-specific atlas of mouse protein phosphorylation and expression.</title>
        <authorList>
            <person name="Huttlin E.L."/>
            <person name="Jedrychowski M.P."/>
            <person name="Elias J.E."/>
            <person name="Goswami T."/>
            <person name="Rad R."/>
            <person name="Beausoleil S.A."/>
            <person name="Villen J."/>
            <person name="Haas W."/>
            <person name="Sowa M.E."/>
            <person name="Gygi S.P."/>
        </authorList>
    </citation>
    <scope>IDENTIFICATION BY MASS SPECTROMETRY [LARGE SCALE ANALYSIS]</scope>
    <source>
        <tissue>Brain</tissue>
        <tissue>Brown adipose tissue</tissue>
        <tissue>Heart</tissue>
        <tissue>Kidney</tissue>
        <tissue>Liver</tissue>
        <tissue>Lung</tissue>
        <tissue>Pancreas</tissue>
        <tissue>Spleen</tissue>
        <tissue>Testis</tissue>
    </source>
</reference>
<proteinExistence type="evidence at protein level"/>
<gene>
    <name type="primary">Rpe</name>
</gene>
<sequence>MASGCKIGPSILNSDLANLGAECLRMLDSGADYLHLDVMDGHFVPNITFGHPVVESLRKQLGQDPFFDMHMMVSRPEQWVKPMAVAGANQYTFHLEATENPGALIKDIRENGMKVGLAIKPGTTVEYLAPWANQIDMALVMTVEPGFGGQKFMEDMMPKVHWLRTQFPTLDIEVDGGVGPDTVQKCAEAGANMIVSGSAIMRSDDPRAVINLLRNVCSEAAQKRSLDR</sequence>
<accession>Q8VEE0</accession>
<accession>Q8C130</accession>
<accession>Q9BSB5</accession>
<accession>Q9CQZ3</accession>
<organism>
    <name type="scientific">Mus musculus</name>
    <name type="common">Mouse</name>
    <dbReference type="NCBI Taxonomy" id="10090"/>
    <lineage>
        <taxon>Eukaryota</taxon>
        <taxon>Metazoa</taxon>
        <taxon>Chordata</taxon>
        <taxon>Craniata</taxon>
        <taxon>Vertebrata</taxon>
        <taxon>Euteleostomi</taxon>
        <taxon>Mammalia</taxon>
        <taxon>Eutheria</taxon>
        <taxon>Euarchontoglires</taxon>
        <taxon>Glires</taxon>
        <taxon>Rodentia</taxon>
        <taxon>Myomorpha</taxon>
        <taxon>Muroidea</taxon>
        <taxon>Muridae</taxon>
        <taxon>Murinae</taxon>
        <taxon>Mus</taxon>
        <taxon>Mus</taxon>
    </lineage>
</organism>
<evidence type="ECO:0000250" key="1">
    <source>
        <dbReference type="UniProtKB" id="P32719"/>
    </source>
</evidence>
<evidence type="ECO:0000250" key="2">
    <source>
        <dbReference type="UniProtKB" id="Q96AT9"/>
    </source>
</evidence>
<evidence type="ECO:0000305" key="3"/>
<keyword id="KW-0007">Acetylation</keyword>
<keyword id="KW-0119">Carbohydrate metabolism</keyword>
<keyword id="KW-0170">Cobalt</keyword>
<keyword id="KW-0408">Iron</keyword>
<keyword id="KW-0413">Isomerase</keyword>
<keyword id="KW-0464">Manganese</keyword>
<keyword id="KW-0479">Metal-binding</keyword>
<keyword id="KW-1185">Reference proteome</keyword>
<keyword id="KW-0862">Zinc</keyword>